<comment type="subunit">
    <text evidence="1">Interacts with CDC20-1 and CDC20-2.</text>
</comment>
<comment type="tissue specificity">
    <text evidence="2">Expressed in roots, stems, leaves, flowers and siliques.</text>
</comment>
<comment type="similarity">
    <text evidence="3">Belongs to the cyclin family. Cyclin AB subfamily.</text>
</comment>
<keyword id="KW-0131">Cell cycle</keyword>
<keyword id="KW-0132">Cell division</keyword>
<keyword id="KW-0195">Cyclin</keyword>
<keyword id="KW-1185">Reference proteome</keyword>
<evidence type="ECO:0000269" key="1">
    <source>
    </source>
</evidence>
<evidence type="ECO:0000269" key="2">
    <source>
    </source>
</evidence>
<evidence type="ECO:0000305" key="3"/>
<sequence length="429" mass="49243">MVNSCENKIFVKPTSTTILQDETRSRKFGQEMKREKRRVLRVINQNLAGARVYPCVVNKRGSLLSNKQEEEEGCQKKKFDSLRPSVTRSGVEEETNKKLKPSVPSANDFGDCIFIDEEEATLDLPMPMSLEKPYIEADPMEEVEMEDVTVEEPIVDIDVLDSKNSLAAVEYVQDLYAFYRTMERFSCVPVDYMMQQIDLNEKMRAILIDWLIEVHDKFDLINETLFLTVNLIDRFLSKQNVMRKKLQLVGLVALLLACKYEEVSVPVVEDLVLISDKAYTRNDVLEMEKTMLSTLQFNISLPTQYPFLKRFLKAAQADKKCEVLASFLIELALVEYEMLRFPPSLLAATSVYTAQCTLDGSRKWNSTCEFHCHYSEDQLMECSRKLVSLHQRAATGNLTGVYRKYSTSKFGYIAKCEAAHFLVSESHHS</sequence>
<accession>Q39068</accession>
<accession>Q9SHP1</accession>
<name>CCB21_ARATH</name>
<dbReference type="EMBL" id="Z31400">
    <property type="protein sequence ID" value="CAA83275.1"/>
    <property type="molecule type" value="mRNA"/>
</dbReference>
<dbReference type="EMBL" id="AC007509">
    <property type="protein sequence ID" value="AAD32949.1"/>
    <property type="molecule type" value="Genomic_DNA"/>
</dbReference>
<dbReference type="EMBL" id="CP002685">
    <property type="protein sequence ID" value="AEC06658.1"/>
    <property type="molecule type" value="Genomic_DNA"/>
</dbReference>
<dbReference type="PIR" id="D84554">
    <property type="entry name" value="D84554"/>
</dbReference>
<dbReference type="RefSeq" id="NP_179353.1">
    <property type="nucleotide sequence ID" value="NM_127316.4"/>
</dbReference>
<dbReference type="SMR" id="Q39068"/>
<dbReference type="BioGRID" id="1626">
    <property type="interactions" value="2"/>
</dbReference>
<dbReference type="FunCoup" id="Q39068">
    <property type="interactions" value="1234"/>
</dbReference>
<dbReference type="IntAct" id="Q39068">
    <property type="interactions" value="1"/>
</dbReference>
<dbReference type="STRING" id="3702.Q39068"/>
<dbReference type="PaxDb" id="3702-AT2G17620.1"/>
<dbReference type="ProteomicsDB" id="224464"/>
<dbReference type="EnsemblPlants" id="AT2G17620.1">
    <property type="protein sequence ID" value="AT2G17620.1"/>
    <property type="gene ID" value="AT2G17620"/>
</dbReference>
<dbReference type="GeneID" id="816269"/>
<dbReference type="Gramene" id="AT2G17620.1">
    <property type="protein sequence ID" value="AT2G17620.1"/>
    <property type="gene ID" value="AT2G17620"/>
</dbReference>
<dbReference type="KEGG" id="ath:AT2G17620"/>
<dbReference type="Araport" id="AT2G17620"/>
<dbReference type="TAIR" id="AT2G17620">
    <property type="gene designation" value="CYCB2"/>
</dbReference>
<dbReference type="eggNOG" id="KOG0653">
    <property type="taxonomic scope" value="Eukaryota"/>
</dbReference>
<dbReference type="HOGENOM" id="CLU_020695_0_0_1"/>
<dbReference type="InParanoid" id="Q39068"/>
<dbReference type="OMA" id="MSFFLME"/>
<dbReference type="PhylomeDB" id="Q39068"/>
<dbReference type="PRO" id="PR:Q39068"/>
<dbReference type="Proteomes" id="UP000006548">
    <property type="component" value="Chromosome 2"/>
</dbReference>
<dbReference type="ExpressionAtlas" id="Q39068">
    <property type="expression patterns" value="baseline and differential"/>
</dbReference>
<dbReference type="GO" id="GO:0016538">
    <property type="term" value="F:cyclin-dependent protein serine/threonine kinase regulator activity"/>
    <property type="evidence" value="ECO:0007669"/>
    <property type="project" value="InterPro"/>
</dbReference>
<dbReference type="GO" id="GO:0051301">
    <property type="term" value="P:cell division"/>
    <property type="evidence" value="ECO:0007669"/>
    <property type="project" value="UniProtKB-KW"/>
</dbReference>
<dbReference type="GO" id="GO:0044772">
    <property type="term" value="P:mitotic cell cycle phase transition"/>
    <property type="evidence" value="ECO:0007669"/>
    <property type="project" value="InterPro"/>
</dbReference>
<dbReference type="CDD" id="cd20567">
    <property type="entry name" value="CYCLIN_AtCycB-like_rpt1"/>
    <property type="match status" value="1"/>
</dbReference>
<dbReference type="CDD" id="cd20511">
    <property type="entry name" value="CYCLIN_AtCycB-like_rpt2"/>
    <property type="match status" value="1"/>
</dbReference>
<dbReference type="FunFam" id="1.10.472.10:FF:000032">
    <property type="entry name" value="G2/mitotic-specific cyclin-1"/>
    <property type="match status" value="1"/>
</dbReference>
<dbReference type="Gene3D" id="1.10.472.10">
    <property type="entry name" value="Cyclin-like"/>
    <property type="match status" value="2"/>
</dbReference>
<dbReference type="InterPro" id="IPR039361">
    <property type="entry name" value="Cyclin"/>
</dbReference>
<dbReference type="InterPro" id="IPR013763">
    <property type="entry name" value="Cyclin-like_dom"/>
</dbReference>
<dbReference type="InterPro" id="IPR036915">
    <property type="entry name" value="Cyclin-like_sf"/>
</dbReference>
<dbReference type="InterPro" id="IPR046965">
    <property type="entry name" value="Cyclin_A/B-like"/>
</dbReference>
<dbReference type="InterPro" id="IPR004367">
    <property type="entry name" value="Cyclin_C-dom"/>
</dbReference>
<dbReference type="InterPro" id="IPR006671">
    <property type="entry name" value="Cyclin_N"/>
</dbReference>
<dbReference type="InterPro" id="IPR048258">
    <property type="entry name" value="Cyclins_cyclin-box"/>
</dbReference>
<dbReference type="PANTHER" id="PTHR10177">
    <property type="entry name" value="CYCLINS"/>
    <property type="match status" value="1"/>
</dbReference>
<dbReference type="Pfam" id="PF02984">
    <property type="entry name" value="Cyclin_C"/>
    <property type="match status" value="1"/>
</dbReference>
<dbReference type="Pfam" id="PF00134">
    <property type="entry name" value="Cyclin_N"/>
    <property type="match status" value="1"/>
</dbReference>
<dbReference type="PIRSF" id="PIRSF001771">
    <property type="entry name" value="Cyclin_A_B_D_E"/>
    <property type="match status" value="1"/>
</dbReference>
<dbReference type="SMART" id="SM00385">
    <property type="entry name" value="CYCLIN"/>
    <property type="match status" value="2"/>
</dbReference>
<dbReference type="SMART" id="SM01332">
    <property type="entry name" value="Cyclin_C"/>
    <property type="match status" value="1"/>
</dbReference>
<dbReference type="SUPFAM" id="SSF47954">
    <property type="entry name" value="Cyclin-like"/>
    <property type="match status" value="2"/>
</dbReference>
<dbReference type="PROSITE" id="PS00292">
    <property type="entry name" value="CYCLINS"/>
    <property type="match status" value="1"/>
</dbReference>
<protein>
    <recommendedName>
        <fullName>Cyclin-B2-1</fullName>
    </recommendedName>
    <alternativeName>
        <fullName>Cyc2a-At</fullName>
    </alternativeName>
    <alternativeName>
        <fullName>Cyclin-2a</fullName>
    </alternativeName>
    <alternativeName>
        <fullName>G2/mitotic-specific cyclin-B2-1</fullName>
        <shortName>CycB2;1</shortName>
    </alternativeName>
</protein>
<organism>
    <name type="scientific">Arabidopsis thaliana</name>
    <name type="common">Mouse-ear cress</name>
    <dbReference type="NCBI Taxonomy" id="3702"/>
    <lineage>
        <taxon>Eukaryota</taxon>
        <taxon>Viridiplantae</taxon>
        <taxon>Streptophyta</taxon>
        <taxon>Embryophyta</taxon>
        <taxon>Tracheophyta</taxon>
        <taxon>Spermatophyta</taxon>
        <taxon>Magnoliopsida</taxon>
        <taxon>eudicotyledons</taxon>
        <taxon>Gunneridae</taxon>
        <taxon>Pentapetalae</taxon>
        <taxon>rosids</taxon>
        <taxon>malvids</taxon>
        <taxon>Brassicales</taxon>
        <taxon>Brassicaceae</taxon>
        <taxon>Camelineae</taxon>
        <taxon>Arabidopsis</taxon>
    </lineage>
</organism>
<proteinExistence type="evidence at protein level"/>
<gene>
    <name type="primary">CYCB2-1</name>
    <name type="synonym">CYC2A</name>
    <name type="ordered locus">At2g17620</name>
    <name type="ORF">T19E12.4</name>
</gene>
<feature type="chain" id="PRO_0000287012" description="Cyclin-B2-1">
    <location>
        <begin position="1"/>
        <end position="429"/>
    </location>
</feature>
<feature type="sequence conflict" description="In Ref. 1; CAA83275." evidence="3" ref="1">
    <original>R</original>
    <variation>K</variation>
    <location>
        <position position="60"/>
    </location>
</feature>
<feature type="sequence conflict" description="In Ref. 1; CAA83275." evidence="3" ref="1">
    <original>I</original>
    <variation>M</variation>
    <location>
        <position position="221"/>
    </location>
</feature>
<reference key="1">
    <citation type="journal article" date="1994" name="Proc. Natl. Acad. Sci. U.S.A.">
        <title>Three discrete classes of Arabidopsis cyclins are expressed during different intervals of the cell cycle.</title>
        <authorList>
            <person name="Ferreira P."/>
            <person name="Hemerly A."/>
            <person name="de Almeida Engler J."/>
            <person name="Bergounioux C."/>
            <person name="Burssens S."/>
            <person name="van Montagu M."/>
            <person name="Engler G."/>
            <person name="Inze D."/>
        </authorList>
    </citation>
    <scope>NUCLEOTIDE SEQUENCE [MRNA]</scope>
    <scope>TISSUE SPECIFICITY</scope>
    <source>
        <strain>cv. Columbia</strain>
        <tissue>Callus</tissue>
    </source>
</reference>
<reference key="2">
    <citation type="journal article" date="1999" name="Nature">
        <title>Sequence and analysis of chromosome 2 of the plant Arabidopsis thaliana.</title>
        <authorList>
            <person name="Lin X."/>
            <person name="Kaul S."/>
            <person name="Rounsley S.D."/>
            <person name="Shea T.P."/>
            <person name="Benito M.-I."/>
            <person name="Town C.D."/>
            <person name="Fujii C.Y."/>
            <person name="Mason T.M."/>
            <person name="Bowman C.L."/>
            <person name="Barnstead M.E."/>
            <person name="Feldblyum T.V."/>
            <person name="Buell C.R."/>
            <person name="Ketchum K.A."/>
            <person name="Lee J.J."/>
            <person name="Ronning C.M."/>
            <person name="Koo H.L."/>
            <person name="Moffat K.S."/>
            <person name="Cronin L.A."/>
            <person name="Shen M."/>
            <person name="Pai G."/>
            <person name="Van Aken S."/>
            <person name="Umayam L."/>
            <person name="Tallon L.J."/>
            <person name="Gill J.E."/>
            <person name="Adams M.D."/>
            <person name="Carrera A.J."/>
            <person name="Creasy T.H."/>
            <person name="Goodman H.M."/>
            <person name="Somerville C.R."/>
            <person name="Copenhaver G.P."/>
            <person name="Preuss D."/>
            <person name="Nierman W.C."/>
            <person name="White O."/>
            <person name="Eisen J.A."/>
            <person name="Salzberg S.L."/>
            <person name="Fraser C.M."/>
            <person name="Venter J.C."/>
        </authorList>
    </citation>
    <scope>NUCLEOTIDE SEQUENCE [LARGE SCALE GENOMIC DNA]</scope>
    <source>
        <strain>cv. Columbia</strain>
    </source>
</reference>
<reference key="3">
    <citation type="journal article" date="2017" name="Plant J.">
        <title>Araport11: a complete reannotation of the Arabidopsis thaliana reference genome.</title>
        <authorList>
            <person name="Cheng C.Y."/>
            <person name="Krishnakumar V."/>
            <person name="Chan A.P."/>
            <person name="Thibaud-Nissen F."/>
            <person name="Schobel S."/>
            <person name="Town C.D."/>
        </authorList>
    </citation>
    <scope>GENOME REANNOTATION</scope>
    <source>
        <strain>cv. Columbia</strain>
    </source>
</reference>
<reference key="4">
    <citation type="journal article" date="2004" name="Plant Physiol.">
        <title>Genome-wide analysis of the cyclin family in Arabidopsis and comparative phylogenetic analysis of plant cyclin-like proteins.</title>
        <authorList>
            <person name="Wang G."/>
            <person name="Kong H."/>
            <person name="Sun Y."/>
            <person name="Zhang X."/>
            <person name="Zhang W."/>
            <person name="Altman N."/>
            <person name="dePamphilis C.W."/>
            <person name="Ma H."/>
        </authorList>
    </citation>
    <scope>GENE FAMILY</scope>
    <scope>NOMENCLATURE</scope>
</reference>
<reference key="5">
    <citation type="journal article" date="2011" name="PLoS ONE">
        <title>Conserved CDC20 cell cycle functions are carried out by two of the five isoforms in Arabidopsis thaliana.</title>
        <authorList>
            <person name="Kevei Z."/>
            <person name="Baloban M."/>
            <person name="Da Ines O."/>
            <person name="Tiricz H."/>
            <person name="Kroll A."/>
            <person name="Regulski K."/>
            <person name="Mergaert P."/>
            <person name="Kondorosi E."/>
        </authorList>
    </citation>
    <scope>INTERACTION WITH CDC20-1 AND CDC20-2</scope>
</reference>